<proteinExistence type="inferred from homology"/>
<protein>
    <recommendedName>
        <fullName>Phosphoglycerate kinase</fullName>
        <ecNumber>2.7.2.3</ecNumber>
    </recommendedName>
</protein>
<gene>
    <name type="primary">pgk</name>
</gene>
<reference key="1">
    <citation type="journal article" date="1996" name="Plant Mol. Biol.">
        <title>Higher-plant chloroplast and cytosolic 3-phosphoglycerate kinases: a case of endosymbiotic gene replacement.</title>
        <authorList>
            <person name="Brinkmann H."/>
            <person name="Martin W."/>
        </authorList>
    </citation>
    <scope>NUCLEOTIDE SEQUENCE [GENOMIC DNA]</scope>
    <source>
        <strain>ATCC 29715 / DSM 3756 / JCM 8877 / NBRC 14741 / NCIMB 2082</strain>
    </source>
</reference>
<evidence type="ECO:0000250" key="1"/>
<evidence type="ECO:0000305" key="2"/>
<feature type="chain" id="PRO_0000146053" description="Phosphoglycerate kinase">
    <location>
        <begin position="1"/>
        <end position="401"/>
    </location>
</feature>
<feature type="binding site" evidence="1">
    <location>
        <begin position="21"/>
        <end position="23"/>
    </location>
    <ligand>
        <name>substrate</name>
    </ligand>
</feature>
<feature type="binding site" evidence="1">
    <location>
        <position position="36"/>
    </location>
    <ligand>
        <name>substrate</name>
    </ligand>
</feature>
<feature type="binding site" evidence="1">
    <location>
        <begin position="59"/>
        <end position="62"/>
    </location>
    <ligand>
        <name>substrate</name>
    </ligand>
</feature>
<feature type="binding site" evidence="1">
    <location>
        <position position="116"/>
    </location>
    <ligand>
        <name>substrate</name>
    </ligand>
</feature>
<feature type="binding site" evidence="1">
    <location>
        <position position="156"/>
    </location>
    <ligand>
        <name>substrate</name>
    </ligand>
</feature>
<feature type="binding site" evidence="1">
    <location>
        <position position="331"/>
    </location>
    <ligand>
        <name>ATP</name>
        <dbReference type="ChEBI" id="CHEBI:30616"/>
    </ligand>
</feature>
<feature type="binding site" evidence="1">
    <location>
        <begin position="357"/>
        <end position="360"/>
    </location>
    <ligand>
        <name>ATP</name>
        <dbReference type="ChEBI" id="CHEBI:30616"/>
    </ligand>
</feature>
<name>PGK_HALVA</name>
<sequence>MMTFQTLDDLDDGQRVLVRLDLNSPVEDGTVQDNRRFDRHAETVKELADRGFEVAVLAHQGRPGRDDFVSLDQHADILADHIDRDVDFVDETYGPQAIHDIADLDSGDVLVLENTRMCDDELPEEDPEVKAQTEFVKTLAGEFDAYINDAYSAAHRSHASLVGFPLVMDAYAGRVMETEYEANTAIAEKEFDGQVTMVVGGTKATDVIDVMTHLDEKVDDFLLGGIAGTVPAAAGHPVGYDIDDANLYDEQWEANSEKIESMLEDHRDQITLAVDLAYEDENDDRAEQAVDDIDEKRLSYLDVGSETLMEYSPIIRESEAVFGEGRAGMFEDERFSVGTAGVLEAIADTDCFSVVGGGDTSRAIEMYGMEEDEFGHVSIAGGAYIRALTRAQLVGVEVLQR</sequence>
<accession>P50315</accession>
<organism>
    <name type="scientific">Haloarcula vallismortis</name>
    <name type="common">Halobacterium vallismortis</name>
    <dbReference type="NCBI Taxonomy" id="28442"/>
    <lineage>
        <taxon>Archaea</taxon>
        <taxon>Methanobacteriati</taxon>
        <taxon>Methanobacteriota</taxon>
        <taxon>Stenosarchaea group</taxon>
        <taxon>Halobacteria</taxon>
        <taxon>Halobacteriales</taxon>
        <taxon>Haloarculaceae</taxon>
        <taxon>Haloarcula</taxon>
    </lineage>
</organism>
<dbReference type="EC" id="2.7.2.3"/>
<dbReference type="EMBL" id="L47295">
    <property type="protein sequence ID" value="AAB03731.1"/>
    <property type="molecule type" value="Genomic_DNA"/>
</dbReference>
<dbReference type="PIR" id="S65044">
    <property type="entry name" value="S65044"/>
</dbReference>
<dbReference type="SMR" id="P50315"/>
<dbReference type="STRING" id="28442.SAMN05443574_102192"/>
<dbReference type="UniPathway" id="UPA00109">
    <property type="reaction ID" value="UER00185"/>
</dbReference>
<dbReference type="GO" id="GO:0005829">
    <property type="term" value="C:cytosol"/>
    <property type="evidence" value="ECO:0007669"/>
    <property type="project" value="TreeGrafter"/>
</dbReference>
<dbReference type="GO" id="GO:0043531">
    <property type="term" value="F:ADP binding"/>
    <property type="evidence" value="ECO:0007669"/>
    <property type="project" value="TreeGrafter"/>
</dbReference>
<dbReference type="GO" id="GO:0005524">
    <property type="term" value="F:ATP binding"/>
    <property type="evidence" value="ECO:0007669"/>
    <property type="project" value="UniProtKB-KW"/>
</dbReference>
<dbReference type="GO" id="GO:0004618">
    <property type="term" value="F:phosphoglycerate kinase activity"/>
    <property type="evidence" value="ECO:0007669"/>
    <property type="project" value="UniProtKB-UniRule"/>
</dbReference>
<dbReference type="GO" id="GO:0006094">
    <property type="term" value="P:gluconeogenesis"/>
    <property type="evidence" value="ECO:0007669"/>
    <property type="project" value="TreeGrafter"/>
</dbReference>
<dbReference type="GO" id="GO:0006096">
    <property type="term" value="P:glycolytic process"/>
    <property type="evidence" value="ECO:0007669"/>
    <property type="project" value="UniProtKB-UniRule"/>
</dbReference>
<dbReference type="Gene3D" id="3.40.50.1260">
    <property type="entry name" value="Phosphoglycerate kinase, N-terminal domain"/>
    <property type="match status" value="2"/>
</dbReference>
<dbReference type="HAMAP" id="MF_00145">
    <property type="entry name" value="Phosphoglyc_kinase"/>
    <property type="match status" value="1"/>
</dbReference>
<dbReference type="InterPro" id="IPR001576">
    <property type="entry name" value="Phosphoglycerate_kinase"/>
</dbReference>
<dbReference type="InterPro" id="IPR015911">
    <property type="entry name" value="Phosphoglycerate_kinase_CS"/>
</dbReference>
<dbReference type="InterPro" id="IPR015824">
    <property type="entry name" value="Phosphoglycerate_kinase_N"/>
</dbReference>
<dbReference type="InterPro" id="IPR036043">
    <property type="entry name" value="Phosphoglycerate_kinase_sf"/>
</dbReference>
<dbReference type="PANTHER" id="PTHR11406">
    <property type="entry name" value="PHOSPHOGLYCERATE KINASE"/>
    <property type="match status" value="1"/>
</dbReference>
<dbReference type="PANTHER" id="PTHR11406:SF23">
    <property type="entry name" value="PHOSPHOGLYCERATE KINASE 1, CHLOROPLASTIC-RELATED"/>
    <property type="match status" value="1"/>
</dbReference>
<dbReference type="Pfam" id="PF00162">
    <property type="entry name" value="PGK"/>
    <property type="match status" value="1"/>
</dbReference>
<dbReference type="PIRSF" id="PIRSF000724">
    <property type="entry name" value="Pgk"/>
    <property type="match status" value="1"/>
</dbReference>
<dbReference type="PRINTS" id="PR00477">
    <property type="entry name" value="PHGLYCKINASE"/>
</dbReference>
<dbReference type="SUPFAM" id="SSF53748">
    <property type="entry name" value="Phosphoglycerate kinase"/>
    <property type="match status" value="1"/>
</dbReference>
<dbReference type="PROSITE" id="PS00111">
    <property type="entry name" value="PGLYCERATE_KINASE"/>
    <property type="match status" value="1"/>
</dbReference>
<comment type="catalytic activity">
    <reaction>
        <text>(2R)-3-phosphoglycerate + ATP = (2R)-3-phospho-glyceroyl phosphate + ADP</text>
        <dbReference type="Rhea" id="RHEA:14801"/>
        <dbReference type="ChEBI" id="CHEBI:30616"/>
        <dbReference type="ChEBI" id="CHEBI:57604"/>
        <dbReference type="ChEBI" id="CHEBI:58272"/>
        <dbReference type="ChEBI" id="CHEBI:456216"/>
        <dbReference type="EC" id="2.7.2.3"/>
    </reaction>
</comment>
<comment type="pathway">
    <text>Carbohydrate degradation; glycolysis; pyruvate from D-glyceraldehyde 3-phosphate: step 2/5.</text>
</comment>
<comment type="subcellular location">
    <subcellularLocation>
        <location>Cytoplasm</location>
    </subcellularLocation>
</comment>
<comment type="similarity">
    <text evidence="2">Belongs to the phosphoglycerate kinase family.</text>
</comment>
<keyword id="KW-0067">ATP-binding</keyword>
<keyword id="KW-0963">Cytoplasm</keyword>
<keyword id="KW-0324">Glycolysis</keyword>
<keyword id="KW-0418">Kinase</keyword>
<keyword id="KW-0547">Nucleotide-binding</keyword>
<keyword id="KW-0808">Transferase</keyword>